<sequence length="330" mass="39133">MGRDYYIFSNGRIKRKENTIYFEDFEGNKKGLPIEDIERLHIFGEVDLNTKFLNYISRYSVLISIYNYYGFYSGSYYSKKKNVSGVLLVNQALAYDNYEFRVAIAKTFIDSAMHHILRNLRRYKEKTSEFVKAIENERKIMKEAKTIEEVMGAEGRARKKYYESYNAFLKFLKNDFHFNKREKKPPNDPINALISFGNSMMYTTVLGEIYKTQLDPTISYLHEPSTKRFSLSLDLAEIFKPLIVDSVIFNMINKGMIKKSDFDTDEGICYLNENGRKKFIKEYENKLSTTVRHRTLNRNVSYRELIRLECYKLIKMLLGDEDYKPLKAWW</sequence>
<keyword id="KW-0051">Antiviral defense</keyword>
<keyword id="KW-0238">DNA-binding</keyword>
<keyword id="KW-0255">Endonuclease</keyword>
<keyword id="KW-0378">Hydrolase</keyword>
<keyword id="KW-0460">Magnesium</keyword>
<keyword id="KW-0464">Manganese</keyword>
<keyword id="KW-0479">Metal-binding</keyword>
<keyword id="KW-0540">Nuclease</keyword>
<evidence type="ECO:0000255" key="1">
    <source>
        <dbReference type="HAMAP-Rule" id="MF_01470"/>
    </source>
</evidence>
<evidence type="ECO:0000305" key="2"/>
<reference key="1">
    <citation type="journal article" date="2006" name="Genome Res.">
        <title>Skewed genomic variability in strains of the toxigenic bacterial pathogen, Clostridium perfringens.</title>
        <authorList>
            <person name="Myers G.S.A."/>
            <person name="Rasko D.A."/>
            <person name="Cheung J.K."/>
            <person name="Ravel J."/>
            <person name="Seshadri R."/>
            <person name="DeBoy R.T."/>
            <person name="Ren Q."/>
            <person name="Varga J."/>
            <person name="Awad M.M."/>
            <person name="Brinkac L.M."/>
            <person name="Daugherty S.C."/>
            <person name="Haft D.H."/>
            <person name="Dodson R.J."/>
            <person name="Madupu R."/>
            <person name="Nelson W.C."/>
            <person name="Rosovitz M.J."/>
            <person name="Sullivan S.A."/>
            <person name="Khouri H."/>
            <person name="Dimitrov G.I."/>
            <person name="Watkins K.L."/>
            <person name="Mulligan S."/>
            <person name="Benton J."/>
            <person name="Radune D."/>
            <person name="Fisher D.J."/>
            <person name="Atkins H.S."/>
            <person name="Hiscox T."/>
            <person name="Jost B.H."/>
            <person name="Billington S.J."/>
            <person name="Songer J.G."/>
            <person name="McClane B.A."/>
            <person name="Titball R.W."/>
            <person name="Rood J.I."/>
            <person name="Melville S.B."/>
            <person name="Paulsen I.T."/>
        </authorList>
    </citation>
    <scope>NUCLEOTIDE SEQUENCE [LARGE SCALE GENOMIC DNA]</scope>
    <source>
        <strain>SM101 / Type A</strain>
    </source>
</reference>
<accession>Q0SUG8</accession>
<protein>
    <recommendedName>
        <fullName evidence="1">CRISPR-associated endonuclease Cas1</fullName>
        <ecNumber evidence="1">3.1.-.-</ecNumber>
    </recommendedName>
</protein>
<feature type="chain" id="PRO_0000417075" description="CRISPR-associated endonuclease Cas1">
    <location>
        <begin position="1"/>
        <end position="330"/>
    </location>
</feature>
<feature type="binding site" evidence="1">
    <location>
        <position position="154"/>
    </location>
    <ligand>
        <name>Mn(2+)</name>
        <dbReference type="ChEBI" id="CHEBI:29035"/>
    </ligand>
</feature>
<feature type="binding site" evidence="1">
    <location>
        <position position="222"/>
    </location>
    <ligand>
        <name>Mn(2+)</name>
        <dbReference type="ChEBI" id="CHEBI:29035"/>
    </ligand>
</feature>
<feature type="binding site" evidence="1">
    <location>
        <position position="237"/>
    </location>
    <ligand>
        <name>Mn(2+)</name>
        <dbReference type="ChEBI" id="CHEBI:29035"/>
    </ligand>
</feature>
<dbReference type="EC" id="3.1.-.-" evidence="1"/>
<dbReference type="EMBL" id="CP000312">
    <property type="protein sequence ID" value="ABG86928.1"/>
    <property type="status" value="ALT_FRAME"/>
    <property type="molecule type" value="Genomic_DNA"/>
</dbReference>
<dbReference type="SMR" id="Q0SUG8"/>
<dbReference type="KEGG" id="cpr:CPR_0915"/>
<dbReference type="Proteomes" id="UP000001824">
    <property type="component" value="Chromosome"/>
</dbReference>
<dbReference type="GO" id="GO:0003677">
    <property type="term" value="F:DNA binding"/>
    <property type="evidence" value="ECO:0007669"/>
    <property type="project" value="UniProtKB-KW"/>
</dbReference>
<dbReference type="GO" id="GO:0004520">
    <property type="term" value="F:DNA endonuclease activity"/>
    <property type="evidence" value="ECO:0007669"/>
    <property type="project" value="InterPro"/>
</dbReference>
<dbReference type="GO" id="GO:0046872">
    <property type="term" value="F:metal ion binding"/>
    <property type="evidence" value="ECO:0007669"/>
    <property type="project" value="UniProtKB-UniRule"/>
</dbReference>
<dbReference type="GO" id="GO:0051607">
    <property type="term" value="P:defense response to virus"/>
    <property type="evidence" value="ECO:0007669"/>
    <property type="project" value="UniProtKB-UniRule"/>
</dbReference>
<dbReference type="GO" id="GO:0043571">
    <property type="term" value="P:maintenance of CRISPR repeat elements"/>
    <property type="evidence" value="ECO:0007669"/>
    <property type="project" value="UniProtKB-UniRule"/>
</dbReference>
<dbReference type="Gene3D" id="1.20.120.920">
    <property type="entry name" value="CRISPR-associated endonuclease Cas1, C-terminal domain"/>
    <property type="match status" value="1"/>
</dbReference>
<dbReference type="Gene3D" id="3.100.10.20">
    <property type="entry name" value="CRISPR-associated endonuclease Cas1, N-terminal domain"/>
    <property type="match status" value="1"/>
</dbReference>
<dbReference type="HAMAP" id="MF_01470">
    <property type="entry name" value="Cas1"/>
    <property type="match status" value="1"/>
</dbReference>
<dbReference type="InterPro" id="IPR002729">
    <property type="entry name" value="CRISPR-assoc_Cas1"/>
</dbReference>
<dbReference type="InterPro" id="IPR042206">
    <property type="entry name" value="CRISPR-assoc_Cas1_C"/>
</dbReference>
<dbReference type="InterPro" id="IPR019858">
    <property type="entry name" value="CRISPR-assoc_Cas1_HMARI/TNEAP"/>
</dbReference>
<dbReference type="InterPro" id="IPR042211">
    <property type="entry name" value="CRISPR-assoc_Cas1_N"/>
</dbReference>
<dbReference type="NCBIfam" id="TIGR00287">
    <property type="entry name" value="cas1"/>
    <property type="match status" value="1"/>
</dbReference>
<dbReference type="NCBIfam" id="TIGR03641">
    <property type="entry name" value="cas1_HMARI"/>
    <property type="match status" value="1"/>
</dbReference>
<dbReference type="PANTHER" id="PTHR43219">
    <property type="entry name" value="CRISPR-ASSOCIATED ENDONUCLEASE CAS1"/>
    <property type="match status" value="1"/>
</dbReference>
<dbReference type="PANTHER" id="PTHR43219:SF2">
    <property type="entry name" value="CRISPR-ASSOCIATED ENDONUCLEASE CAS1"/>
    <property type="match status" value="1"/>
</dbReference>
<dbReference type="Pfam" id="PF01867">
    <property type="entry name" value="Cas_Cas1"/>
    <property type="match status" value="1"/>
</dbReference>
<proteinExistence type="inferred from homology"/>
<name>CAS1_CLOPS</name>
<comment type="function">
    <text evidence="1">CRISPR (clustered regularly interspaced short palindromic repeat), is an adaptive immune system that provides protection against mobile genetic elements (viruses, transposable elements and conjugative plasmids). CRISPR clusters contain spacers, sequences complementary to antecedent mobile elements, and target invading nucleic acids. CRISPR clusters are transcribed and processed into CRISPR RNA (crRNA). Acts as a dsDNA endonuclease. Involved in the integration of spacer DNA into the CRISPR cassette.</text>
</comment>
<comment type="cofactor">
    <cofactor evidence="1">
        <name>Mg(2+)</name>
        <dbReference type="ChEBI" id="CHEBI:18420"/>
    </cofactor>
    <cofactor evidence="1">
        <name>Mn(2+)</name>
        <dbReference type="ChEBI" id="CHEBI:29035"/>
    </cofactor>
</comment>
<comment type="subunit">
    <text evidence="1">Homodimer, forms a heterotetramer with a Cas2 homodimer.</text>
</comment>
<comment type="similarity">
    <text evidence="1">Belongs to the CRISPR-associated endonuclease Cas1 family.</text>
</comment>
<comment type="sequence caution" evidence="2">
    <conflict type="frameshift">
        <sequence resource="EMBL-CDS" id="ABG86928"/>
    </conflict>
</comment>
<gene>
    <name evidence="1" type="primary">cas1</name>
    <name type="ordered locus">CPR_0915</name>
</gene>
<organism>
    <name type="scientific">Clostridium perfringens (strain SM101 / Type A)</name>
    <dbReference type="NCBI Taxonomy" id="289380"/>
    <lineage>
        <taxon>Bacteria</taxon>
        <taxon>Bacillati</taxon>
        <taxon>Bacillota</taxon>
        <taxon>Clostridia</taxon>
        <taxon>Eubacteriales</taxon>
        <taxon>Clostridiaceae</taxon>
        <taxon>Clostridium</taxon>
    </lineage>
</organism>